<reference key="1">
    <citation type="journal article" date="2004" name="Nat. Genet.">
        <title>Complete sequencing and characterization of 21,243 full-length human cDNAs.</title>
        <authorList>
            <person name="Ota T."/>
            <person name="Suzuki Y."/>
            <person name="Nishikawa T."/>
            <person name="Otsuki T."/>
            <person name="Sugiyama T."/>
            <person name="Irie R."/>
            <person name="Wakamatsu A."/>
            <person name="Hayashi K."/>
            <person name="Sato H."/>
            <person name="Nagai K."/>
            <person name="Kimura K."/>
            <person name="Makita H."/>
            <person name="Sekine M."/>
            <person name="Obayashi M."/>
            <person name="Nishi T."/>
            <person name="Shibahara T."/>
            <person name="Tanaka T."/>
            <person name="Ishii S."/>
            <person name="Yamamoto J."/>
            <person name="Saito K."/>
            <person name="Kawai Y."/>
            <person name="Isono Y."/>
            <person name="Nakamura Y."/>
            <person name="Nagahari K."/>
            <person name="Murakami K."/>
            <person name="Yasuda T."/>
            <person name="Iwayanagi T."/>
            <person name="Wagatsuma M."/>
            <person name="Shiratori A."/>
            <person name="Sudo H."/>
            <person name="Hosoiri T."/>
            <person name="Kaku Y."/>
            <person name="Kodaira H."/>
            <person name="Kondo H."/>
            <person name="Sugawara M."/>
            <person name="Takahashi M."/>
            <person name="Kanda K."/>
            <person name="Yokoi T."/>
            <person name="Furuya T."/>
            <person name="Kikkawa E."/>
            <person name="Omura Y."/>
            <person name="Abe K."/>
            <person name="Kamihara K."/>
            <person name="Katsuta N."/>
            <person name="Sato K."/>
            <person name="Tanikawa M."/>
            <person name="Yamazaki M."/>
            <person name="Ninomiya K."/>
            <person name="Ishibashi T."/>
            <person name="Yamashita H."/>
            <person name="Murakawa K."/>
            <person name="Fujimori K."/>
            <person name="Tanai H."/>
            <person name="Kimata M."/>
            <person name="Watanabe M."/>
            <person name="Hiraoka S."/>
            <person name="Chiba Y."/>
            <person name="Ishida S."/>
            <person name="Ono Y."/>
            <person name="Takiguchi S."/>
            <person name="Watanabe S."/>
            <person name="Yosida M."/>
            <person name="Hotuta T."/>
            <person name="Kusano J."/>
            <person name="Kanehori K."/>
            <person name="Takahashi-Fujii A."/>
            <person name="Hara H."/>
            <person name="Tanase T.-O."/>
            <person name="Nomura Y."/>
            <person name="Togiya S."/>
            <person name="Komai F."/>
            <person name="Hara R."/>
            <person name="Takeuchi K."/>
            <person name="Arita M."/>
            <person name="Imose N."/>
            <person name="Musashino K."/>
            <person name="Yuuki H."/>
            <person name="Oshima A."/>
            <person name="Sasaki N."/>
            <person name="Aotsuka S."/>
            <person name="Yoshikawa Y."/>
            <person name="Matsunawa H."/>
            <person name="Ichihara T."/>
            <person name="Shiohata N."/>
            <person name="Sano S."/>
            <person name="Moriya S."/>
            <person name="Momiyama H."/>
            <person name="Satoh N."/>
            <person name="Takami S."/>
            <person name="Terashima Y."/>
            <person name="Suzuki O."/>
            <person name="Nakagawa S."/>
            <person name="Senoh A."/>
            <person name="Mizoguchi H."/>
            <person name="Goto Y."/>
            <person name="Shimizu F."/>
            <person name="Wakebe H."/>
            <person name="Hishigaki H."/>
            <person name="Watanabe T."/>
            <person name="Sugiyama A."/>
            <person name="Takemoto M."/>
            <person name="Kawakami B."/>
            <person name="Yamazaki M."/>
            <person name="Watanabe K."/>
            <person name="Kumagai A."/>
            <person name="Itakura S."/>
            <person name="Fukuzumi Y."/>
            <person name="Fujimori Y."/>
            <person name="Komiyama M."/>
            <person name="Tashiro H."/>
            <person name="Tanigami A."/>
            <person name="Fujiwara T."/>
            <person name="Ono T."/>
            <person name="Yamada K."/>
            <person name="Fujii Y."/>
            <person name="Ozaki K."/>
            <person name="Hirao M."/>
            <person name="Ohmori Y."/>
            <person name="Kawabata A."/>
            <person name="Hikiji T."/>
            <person name="Kobatake N."/>
            <person name="Inagaki H."/>
            <person name="Ikema Y."/>
            <person name="Okamoto S."/>
            <person name="Okitani R."/>
            <person name="Kawakami T."/>
            <person name="Noguchi S."/>
            <person name="Itoh T."/>
            <person name="Shigeta K."/>
            <person name="Senba T."/>
            <person name="Matsumura K."/>
            <person name="Nakajima Y."/>
            <person name="Mizuno T."/>
            <person name="Morinaga M."/>
            <person name="Sasaki M."/>
            <person name="Togashi T."/>
            <person name="Oyama M."/>
            <person name="Hata H."/>
            <person name="Watanabe M."/>
            <person name="Komatsu T."/>
            <person name="Mizushima-Sugano J."/>
            <person name="Satoh T."/>
            <person name="Shirai Y."/>
            <person name="Takahashi Y."/>
            <person name="Nakagawa K."/>
            <person name="Okumura K."/>
            <person name="Nagase T."/>
            <person name="Nomura N."/>
            <person name="Kikuchi H."/>
            <person name="Masuho Y."/>
            <person name="Yamashita R."/>
            <person name="Nakai K."/>
            <person name="Yada T."/>
            <person name="Nakamura Y."/>
            <person name="Ohara O."/>
            <person name="Isogai T."/>
            <person name="Sugano S."/>
        </authorList>
    </citation>
    <scope>NUCLEOTIDE SEQUENCE [LARGE SCALE MRNA]</scope>
</reference>
<reference key="2">
    <citation type="journal article" date="2006" name="Nature">
        <title>The DNA sequence and biological annotation of human chromosome 1.</title>
        <authorList>
            <person name="Gregory S.G."/>
            <person name="Barlow K.F."/>
            <person name="McLay K.E."/>
            <person name="Kaul R."/>
            <person name="Swarbreck D."/>
            <person name="Dunham A."/>
            <person name="Scott C.E."/>
            <person name="Howe K.L."/>
            <person name="Woodfine K."/>
            <person name="Spencer C.C.A."/>
            <person name="Jones M.C."/>
            <person name="Gillson C."/>
            <person name="Searle S."/>
            <person name="Zhou Y."/>
            <person name="Kokocinski F."/>
            <person name="McDonald L."/>
            <person name="Evans R."/>
            <person name="Phillips K."/>
            <person name="Atkinson A."/>
            <person name="Cooper R."/>
            <person name="Jones C."/>
            <person name="Hall R.E."/>
            <person name="Andrews T.D."/>
            <person name="Lloyd C."/>
            <person name="Ainscough R."/>
            <person name="Almeida J.P."/>
            <person name="Ambrose K.D."/>
            <person name="Anderson F."/>
            <person name="Andrew R.W."/>
            <person name="Ashwell R.I.S."/>
            <person name="Aubin K."/>
            <person name="Babbage A.K."/>
            <person name="Bagguley C.L."/>
            <person name="Bailey J."/>
            <person name="Beasley H."/>
            <person name="Bethel G."/>
            <person name="Bird C.P."/>
            <person name="Bray-Allen S."/>
            <person name="Brown J.Y."/>
            <person name="Brown A.J."/>
            <person name="Buckley D."/>
            <person name="Burton J."/>
            <person name="Bye J."/>
            <person name="Carder C."/>
            <person name="Chapman J.C."/>
            <person name="Clark S.Y."/>
            <person name="Clarke G."/>
            <person name="Clee C."/>
            <person name="Cobley V."/>
            <person name="Collier R.E."/>
            <person name="Corby N."/>
            <person name="Coville G.J."/>
            <person name="Davies J."/>
            <person name="Deadman R."/>
            <person name="Dunn M."/>
            <person name="Earthrowl M."/>
            <person name="Ellington A.G."/>
            <person name="Errington H."/>
            <person name="Frankish A."/>
            <person name="Frankland J."/>
            <person name="French L."/>
            <person name="Garner P."/>
            <person name="Garnett J."/>
            <person name="Gay L."/>
            <person name="Ghori M.R.J."/>
            <person name="Gibson R."/>
            <person name="Gilby L.M."/>
            <person name="Gillett W."/>
            <person name="Glithero R.J."/>
            <person name="Grafham D.V."/>
            <person name="Griffiths C."/>
            <person name="Griffiths-Jones S."/>
            <person name="Grocock R."/>
            <person name="Hammond S."/>
            <person name="Harrison E.S.I."/>
            <person name="Hart E."/>
            <person name="Haugen E."/>
            <person name="Heath P.D."/>
            <person name="Holmes S."/>
            <person name="Holt K."/>
            <person name="Howden P.J."/>
            <person name="Hunt A.R."/>
            <person name="Hunt S.E."/>
            <person name="Hunter G."/>
            <person name="Isherwood J."/>
            <person name="James R."/>
            <person name="Johnson C."/>
            <person name="Johnson D."/>
            <person name="Joy A."/>
            <person name="Kay M."/>
            <person name="Kershaw J.K."/>
            <person name="Kibukawa M."/>
            <person name="Kimberley A.M."/>
            <person name="King A."/>
            <person name="Knights A.J."/>
            <person name="Lad H."/>
            <person name="Laird G."/>
            <person name="Lawlor S."/>
            <person name="Leongamornlert D.A."/>
            <person name="Lloyd D.M."/>
            <person name="Loveland J."/>
            <person name="Lovell J."/>
            <person name="Lush M.J."/>
            <person name="Lyne R."/>
            <person name="Martin S."/>
            <person name="Mashreghi-Mohammadi M."/>
            <person name="Matthews L."/>
            <person name="Matthews N.S.W."/>
            <person name="McLaren S."/>
            <person name="Milne S."/>
            <person name="Mistry S."/>
            <person name="Moore M.J.F."/>
            <person name="Nickerson T."/>
            <person name="O'Dell C.N."/>
            <person name="Oliver K."/>
            <person name="Palmeiri A."/>
            <person name="Palmer S.A."/>
            <person name="Parker A."/>
            <person name="Patel D."/>
            <person name="Pearce A.V."/>
            <person name="Peck A.I."/>
            <person name="Pelan S."/>
            <person name="Phelps K."/>
            <person name="Phillimore B.J."/>
            <person name="Plumb R."/>
            <person name="Rajan J."/>
            <person name="Raymond C."/>
            <person name="Rouse G."/>
            <person name="Saenphimmachak C."/>
            <person name="Sehra H.K."/>
            <person name="Sheridan E."/>
            <person name="Shownkeen R."/>
            <person name="Sims S."/>
            <person name="Skuce C.D."/>
            <person name="Smith M."/>
            <person name="Steward C."/>
            <person name="Subramanian S."/>
            <person name="Sycamore N."/>
            <person name="Tracey A."/>
            <person name="Tromans A."/>
            <person name="Van Helmond Z."/>
            <person name="Wall M."/>
            <person name="Wallis J.M."/>
            <person name="White S."/>
            <person name="Whitehead S.L."/>
            <person name="Wilkinson J.E."/>
            <person name="Willey D.L."/>
            <person name="Williams H."/>
            <person name="Wilming L."/>
            <person name="Wray P.W."/>
            <person name="Wu Z."/>
            <person name="Coulson A."/>
            <person name="Vaudin M."/>
            <person name="Sulston J.E."/>
            <person name="Durbin R.M."/>
            <person name="Hubbard T."/>
            <person name="Wooster R."/>
            <person name="Dunham I."/>
            <person name="Carter N.P."/>
            <person name="McVean G."/>
            <person name="Ross M.T."/>
            <person name="Harrow J."/>
            <person name="Olson M.V."/>
            <person name="Beck S."/>
            <person name="Rogers J."/>
            <person name="Bentley D.R."/>
        </authorList>
    </citation>
    <scope>NUCLEOTIDE SEQUENCE [LARGE SCALE GENOMIC DNA]</scope>
</reference>
<proteinExistence type="evidence at protein level"/>
<protein>
    <recommendedName>
        <fullName>Uncharacterized protein C1orf185</fullName>
    </recommendedName>
</protein>
<keyword id="KW-0472">Membrane</keyword>
<keyword id="KW-1267">Proteomics identification</keyword>
<keyword id="KW-1185">Reference proteome</keyword>
<keyword id="KW-0812">Transmembrane</keyword>
<keyword id="KW-1133">Transmembrane helix</keyword>
<name>CA185_HUMAN</name>
<gene>
    <name type="primary">C1orf185</name>
</gene>
<dbReference type="EMBL" id="AK130995">
    <property type="status" value="NOT_ANNOTATED_CDS"/>
    <property type="molecule type" value="mRNA"/>
</dbReference>
<dbReference type="EMBL" id="AL162430">
    <property type="status" value="NOT_ANNOTATED_CDS"/>
    <property type="molecule type" value="Genomic_DNA"/>
</dbReference>
<dbReference type="CCDS" id="CCDS44142.1"/>
<dbReference type="RefSeq" id="NP_001129980.1">
    <property type="nucleotide sequence ID" value="NM_001136508.2"/>
</dbReference>
<dbReference type="SMR" id="Q5T7R7"/>
<dbReference type="BioGRID" id="129898">
    <property type="interactions" value="1"/>
</dbReference>
<dbReference type="STRING" id="9606.ENSP00000360824"/>
<dbReference type="BioMuta" id="C1orf185"/>
<dbReference type="DMDM" id="74745420"/>
<dbReference type="MassIVE" id="Q5T7R7"/>
<dbReference type="PaxDb" id="9606-ENSP00000360824"/>
<dbReference type="PeptideAtlas" id="Q5T7R7"/>
<dbReference type="ProteomicsDB" id="64679"/>
<dbReference type="Antibodypedia" id="66801">
    <property type="antibodies" value="31 antibodies from 3 providers"/>
</dbReference>
<dbReference type="DNASU" id="284546"/>
<dbReference type="Ensembl" id="ENST00000371759.7">
    <property type="protein sequence ID" value="ENSP00000360824.2"/>
    <property type="gene ID" value="ENSG00000204006.11"/>
</dbReference>
<dbReference type="GeneID" id="284546"/>
<dbReference type="KEGG" id="hsa:284546"/>
<dbReference type="MANE-Select" id="ENST00000371759.7">
    <property type="protein sequence ID" value="ENSP00000360824.2"/>
    <property type="RefSeq nucleotide sequence ID" value="NM_001136508.2"/>
    <property type="RefSeq protein sequence ID" value="NP_001129980.1"/>
</dbReference>
<dbReference type="UCSC" id="uc001csh.4">
    <property type="organism name" value="human"/>
</dbReference>
<dbReference type="AGR" id="HGNC:28096"/>
<dbReference type="CTD" id="284546"/>
<dbReference type="DisGeNET" id="284546"/>
<dbReference type="GeneCards" id="C1orf185"/>
<dbReference type="HGNC" id="HGNC:28096">
    <property type="gene designation" value="C1orf185"/>
</dbReference>
<dbReference type="HPA" id="ENSG00000204006">
    <property type="expression patterns" value="Tissue enriched (testis)"/>
</dbReference>
<dbReference type="neXtProt" id="NX_Q5T7R7"/>
<dbReference type="OpenTargets" id="ENSG00000204006"/>
<dbReference type="PharmGKB" id="PA142672433"/>
<dbReference type="VEuPathDB" id="HostDB:ENSG00000204006"/>
<dbReference type="eggNOG" id="ENOG502T2P4">
    <property type="taxonomic scope" value="Eukaryota"/>
</dbReference>
<dbReference type="GeneTree" id="ENSGT00390000000797"/>
<dbReference type="InParanoid" id="Q5T7R7"/>
<dbReference type="OMA" id="TKSHSQC"/>
<dbReference type="OrthoDB" id="9423720at2759"/>
<dbReference type="PAN-GO" id="Q5T7R7">
    <property type="GO annotations" value="0 GO annotations based on evolutionary models"/>
</dbReference>
<dbReference type="PhylomeDB" id="Q5T7R7"/>
<dbReference type="TreeFam" id="TF338951"/>
<dbReference type="BioGRID-ORCS" id="284546">
    <property type="hits" value="13 hits in 1128 CRISPR screens"/>
</dbReference>
<dbReference type="ChiTaRS" id="C1orf185">
    <property type="organism name" value="human"/>
</dbReference>
<dbReference type="GenomeRNAi" id="284546"/>
<dbReference type="Pharos" id="Q5T7R7">
    <property type="development level" value="Tdark"/>
</dbReference>
<dbReference type="PRO" id="PR:Q5T7R7"/>
<dbReference type="Proteomes" id="UP000005640">
    <property type="component" value="Chromosome 1"/>
</dbReference>
<dbReference type="RNAct" id="Q5T7R7">
    <property type="molecule type" value="protein"/>
</dbReference>
<dbReference type="Bgee" id="ENSG00000204006">
    <property type="expression patterns" value="Expressed in male germ line stem cell (sensu Vertebrata) in testis and 36 other cell types or tissues"/>
</dbReference>
<dbReference type="ExpressionAtlas" id="Q5T7R7">
    <property type="expression patterns" value="baseline and differential"/>
</dbReference>
<dbReference type="GO" id="GO:0016020">
    <property type="term" value="C:membrane"/>
    <property type="evidence" value="ECO:0007669"/>
    <property type="project" value="UniProtKB-SubCell"/>
</dbReference>
<dbReference type="InterPro" id="IPR031695">
    <property type="entry name" value="DUF4718"/>
</dbReference>
<dbReference type="PANTHER" id="PTHR37858:SF1">
    <property type="entry name" value="CHROMOSOME 1 OPEN READING FRAME 185"/>
    <property type="match status" value="1"/>
</dbReference>
<dbReference type="PANTHER" id="PTHR37858">
    <property type="entry name" value="HYPOTHETICAL PROTEIN LOC689589"/>
    <property type="match status" value="1"/>
</dbReference>
<dbReference type="Pfam" id="PF15842">
    <property type="entry name" value="DUF4718"/>
    <property type="match status" value="1"/>
</dbReference>
<sequence>MASPKGFFNYLTYFLAAGAVTLGIGFFALASALWFLICKRREIFQNSKFKAIDERCRQRPSMAKIKSHSQCVFISRNFHTGRFQLQEEQRKKEAAHIKAIKDHSKDEPQLATKNIICDPSETSSTTNRSSVTLSLSTLPSDSYYSQSIEAADDWFSDDSLVKRNSPMPSLGEPLMEKVFSYLSTISLEEGTESVLNDTL</sequence>
<organism>
    <name type="scientific">Homo sapiens</name>
    <name type="common">Human</name>
    <dbReference type="NCBI Taxonomy" id="9606"/>
    <lineage>
        <taxon>Eukaryota</taxon>
        <taxon>Metazoa</taxon>
        <taxon>Chordata</taxon>
        <taxon>Craniata</taxon>
        <taxon>Vertebrata</taxon>
        <taxon>Euteleostomi</taxon>
        <taxon>Mammalia</taxon>
        <taxon>Eutheria</taxon>
        <taxon>Euarchontoglires</taxon>
        <taxon>Primates</taxon>
        <taxon>Haplorrhini</taxon>
        <taxon>Catarrhini</taxon>
        <taxon>Hominidae</taxon>
        <taxon>Homo</taxon>
    </lineage>
</organism>
<evidence type="ECO:0000255" key="1"/>
<evidence type="ECO:0000305" key="2"/>
<feature type="chain" id="PRO_0000271101" description="Uncharacterized protein C1orf185">
    <location>
        <begin position="1"/>
        <end position="199"/>
    </location>
</feature>
<feature type="transmembrane region" description="Helical" evidence="1">
    <location>
        <begin position="17"/>
        <end position="37"/>
    </location>
</feature>
<accession>Q5T7R7</accession>
<accession>A6NHS3</accession>
<comment type="subcellular location">
    <subcellularLocation>
        <location evidence="2">Membrane</location>
        <topology evidence="2">Single-pass membrane protein</topology>
    </subcellularLocation>
</comment>